<name>GP1D_CHLT2</name>
<organism>
    <name type="scientific">Chlamydia trachomatis serovar L2 (strain ATCC VR-902B / DSM 19102 / 434/Bu)</name>
    <dbReference type="NCBI Taxonomy" id="471472"/>
    <lineage>
        <taxon>Bacteria</taxon>
        <taxon>Pseudomonadati</taxon>
        <taxon>Chlamydiota</taxon>
        <taxon>Chlamydiia</taxon>
        <taxon>Chlamydiales</taxon>
        <taxon>Chlamydiaceae</taxon>
        <taxon>Chlamydia/Chlamydophila group</taxon>
        <taxon>Chlamydia</taxon>
    </lineage>
</organism>
<evidence type="ECO:0000250" key="1">
    <source>
        <dbReference type="UniProtKB" id="P0ACB0"/>
    </source>
</evidence>
<evidence type="ECO:0000255" key="2">
    <source>
        <dbReference type="PROSITE-ProRule" id="PRU00596"/>
    </source>
</evidence>
<evidence type="ECO:0000305" key="3"/>
<evidence type="ECO:0000305" key="4">
    <source>
    </source>
</evidence>
<gene>
    <name type="ordered locus">pL2-03</name>
</gene>
<comment type="function">
    <text evidence="1">A replicative DNA helicase, it participates in initiation and elongation during DNA replication. Travels ahead of the DNA replisome, separating dsDNA into templates for DNA synthesis. A processive ATP-dependent 5'-3' DNA helicase it has DNA-dependent ATPase activity.</text>
</comment>
<comment type="function">
    <text evidence="4">The plasmid this protein is encoded on is thought to be required for growth within mammalian cells.</text>
</comment>
<comment type="catalytic activity">
    <reaction evidence="1">
        <text>Couples ATP hydrolysis with the unwinding of duplex DNA at the replication fork by translocating in the 5'-3' direction. This creates two antiparallel DNA single strands (ssDNA). The leading ssDNA polymer is the template for DNA polymerase III holoenzyme which synthesizes a continuous strand.</text>
        <dbReference type="EC" id="5.6.2.3"/>
    </reaction>
</comment>
<comment type="catalytic activity">
    <reaction evidence="1">
        <text>ATP + H2O = ADP + phosphate + H(+)</text>
        <dbReference type="Rhea" id="RHEA:13065"/>
        <dbReference type="ChEBI" id="CHEBI:15377"/>
        <dbReference type="ChEBI" id="CHEBI:15378"/>
        <dbReference type="ChEBI" id="CHEBI:30616"/>
        <dbReference type="ChEBI" id="CHEBI:43474"/>
        <dbReference type="ChEBI" id="CHEBI:456216"/>
        <dbReference type="EC" id="5.6.2.3"/>
    </reaction>
</comment>
<comment type="subunit">
    <text evidence="1">Homohexamer.</text>
</comment>
<comment type="similarity">
    <text evidence="3">Belongs to the helicase family. DnaB subfamily.</text>
</comment>
<sequence length="451" mass="51457">MKTRSEIENRMQDIEYALLGKALIFEDSTEYILRQLANYEFKCSHHKNIFIVFKYLKDNGLPITVDSAWEELLRRRIKDMDKSYLGLMLHDALSNDKLRSVSHTVFLDDLSVCSAEENLSNFIFRSFNEYNENPLRRSPFLLLERIKGRLDSAIAKTFSIRSARGRSIYDIFSQSEIGVLARIKKRRATFSENQNSFFDAFPTGYKDIDDKGVILAKGNFVIIAARPSIGKTALAIDMAINLAVTQQRRVGFLSLEMSAGQIVERIIANLTGISGEKLQRGDLSKEELFRVEEAGETVRESHFYICSDSQYKLNLIANQIRLLRKEDRVDVIFIDYLQLINSSVGENRQNEIADISRTLRGLASELNIPIVCLSQLSRKVEDRANKVPMLSDLRDSGQIEQDADVILFINRKESSSNCEITVGKNRHGSVFSSVLHFDPKISKFSAIKKVW</sequence>
<dbReference type="EC" id="5.6.2.3" evidence="1"/>
<dbReference type="EMBL" id="X07547">
    <property type="protein sequence ID" value="CAA30421.1"/>
    <property type="molecule type" value="Genomic_DNA"/>
</dbReference>
<dbReference type="EMBL" id="AM886278">
    <property type="protein sequence ID" value="CAP09061.1"/>
    <property type="molecule type" value="Genomic_DNA"/>
</dbReference>
<dbReference type="PIR" id="S01921">
    <property type="entry name" value="S01921"/>
</dbReference>
<dbReference type="RefSeq" id="YP_001654084.1">
    <property type="nucleotide sequence ID" value="NC_010286.1"/>
</dbReference>
<dbReference type="SMR" id="B0BCM3"/>
<dbReference type="GO" id="GO:0005829">
    <property type="term" value="C:cytosol"/>
    <property type="evidence" value="ECO:0007669"/>
    <property type="project" value="TreeGrafter"/>
</dbReference>
<dbReference type="GO" id="GO:1990077">
    <property type="term" value="C:primosome complex"/>
    <property type="evidence" value="ECO:0007669"/>
    <property type="project" value="UniProtKB-KW"/>
</dbReference>
<dbReference type="GO" id="GO:0005524">
    <property type="term" value="F:ATP binding"/>
    <property type="evidence" value="ECO:0007669"/>
    <property type="project" value="UniProtKB-KW"/>
</dbReference>
<dbReference type="GO" id="GO:0016887">
    <property type="term" value="F:ATP hydrolysis activity"/>
    <property type="evidence" value="ECO:0007669"/>
    <property type="project" value="InterPro"/>
</dbReference>
<dbReference type="GO" id="GO:0003677">
    <property type="term" value="F:DNA binding"/>
    <property type="evidence" value="ECO:0007669"/>
    <property type="project" value="UniProtKB-KW"/>
</dbReference>
<dbReference type="GO" id="GO:0003678">
    <property type="term" value="F:DNA helicase activity"/>
    <property type="evidence" value="ECO:0007669"/>
    <property type="project" value="InterPro"/>
</dbReference>
<dbReference type="GO" id="GO:0006269">
    <property type="term" value="P:DNA replication, synthesis of primer"/>
    <property type="evidence" value="ECO:0007669"/>
    <property type="project" value="UniProtKB-KW"/>
</dbReference>
<dbReference type="CDD" id="cd00984">
    <property type="entry name" value="DnaB_C"/>
    <property type="match status" value="1"/>
</dbReference>
<dbReference type="Gene3D" id="3.40.50.300">
    <property type="entry name" value="P-loop containing nucleotide triphosphate hydrolases"/>
    <property type="match status" value="1"/>
</dbReference>
<dbReference type="InterPro" id="IPR003593">
    <property type="entry name" value="AAA+_ATPase"/>
</dbReference>
<dbReference type="InterPro" id="IPR036185">
    <property type="entry name" value="DNA_heli_DnaB-like_N_sf"/>
</dbReference>
<dbReference type="InterPro" id="IPR007694">
    <property type="entry name" value="DNA_helicase_DnaB-like_C"/>
</dbReference>
<dbReference type="InterPro" id="IPR007693">
    <property type="entry name" value="DNA_helicase_DnaB-like_N"/>
</dbReference>
<dbReference type="InterPro" id="IPR027417">
    <property type="entry name" value="P-loop_NTPase"/>
</dbReference>
<dbReference type="PANTHER" id="PTHR30153:SF2">
    <property type="entry name" value="REPLICATIVE DNA HELICASE"/>
    <property type="match status" value="1"/>
</dbReference>
<dbReference type="PANTHER" id="PTHR30153">
    <property type="entry name" value="REPLICATIVE DNA HELICASE DNAB"/>
    <property type="match status" value="1"/>
</dbReference>
<dbReference type="Pfam" id="PF00772">
    <property type="entry name" value="DnaB"/>
    <property type="match status" value="1"/>
</dbReference>
<dbReference type="Pfam" id="PF03796">
    <property type="entry name" value="DnaB_C"/>
    <property type="match status" value="1"/>
</dbReference>
<dbReference type="SMART" id="SM00382">
    <property type="entry name" value="AAA"/>
    <property type="match status" value="1"/>
</dbReference>
<dbReference type="SUPFAM" id="SSF48024">
    <property type="entry name" value="N-terminal domain of DnaB helicase"/>
    <property type="match status" value="1"/>
</dbReference>
<dbReference type="SUPFAM" id="SSF52540">
    <property type="entry name" value="P-loop containing nucleoside triphosphate hydrolases"/>
    <property type="match status" value="1"/>
</dbReference>
<dbReference type="PROSITE" id="PS51199">
    <property type="entry name" value="SF4_HELICASE"/>
    <property type="match status" value="1"/>
</dbReference>
<reference key="1">
    <citation type="journal article" date="1988" name="Mol. Microbiol.">
        <title>The structure of a plasmid of Chlamydia trachomatis believed to be required for growth within mammalian cells.</title>
        <authorList>
            <person name="Comanducci M."/>
            <person name="Ricci S."/>
            <person name="Ratti G."/>
        </authorList>
    </citation>
    <scope>NUCLEOTIDE SEQUENCE [GENOMIC DNA]</scope>
    <source>
        <plasmid>pLGV440</plasmid>
    </source>
</reference>
<reference key="2">
    <citation type="journal article" date="2008" name="Genome Res.">
        <title>Chlamydia trachomatis: genome sequence analysis of lymphogranuloma venereum isolates.</title>
        <authorList>
            <person name="Thomson N.R."/>
            <person name="Holden M.T.G."/>
            <person name="Carder C."/>
            <person name="Lennard N."/>
            <person name="Lockey S.J."/>
            <person name="Marsh P."/>
            <person name="Skipp P."/>
            <person name="O'Connor C.D."/>
            <person name="Goodhead I."/>
            <person name="Norbertzcak H."/>
            <person name="Harris B."/>
            <person name="Ormond D."/>
            <person name="Rance R."/>
            <person name="Quail M.A."/>
            <person name="Parkhill J."/>
            <person name="Stephens R.S."/>
            <person name="Clarke I.N."/>
        </authorList>
    </citation>
    <scope>NUCLEOTIDE SEQUENCE [LARGE SCALE GENOMIC DNA]</scope>
    <source>
        <strain>ATCC VR-902B / DSM 19102 / 434/Bu</strain>
        <plasmid>pL2</plasmid>
    </source>
</reference>
<protein>
    <recommendedName>
        <fullName>Probable plasmid replicative DNA helicase</fullName>
        <ecNumber evidence="1">5.6.2.3</ecNumber>
    </recommendedName>
    <alternativeName>
        <fullName evidence="3">DNA 5'-3' helicase pGP1-D</fullName>
    </alternativeName>
    <alternativeName>
        <fullName>DnaB-like protein</fullName>
    </alternativeName>
    <alternativeName>
        <fullName>Protein P-3</fullName>
    </alternativeName>
    <alternativeName>
        <fullName>Virulence plasmid protein pGP1-D</fullName>
    </alternativeName>
</protein>
<keyword id="KW-0067">ATP-binding</keyword>
<keyword id="KW-0235">DNA replication</keyword>
<keyword id="KW-0238">DNA-binding</keyword>
<keyword id="KW-0347">Helicase</keyword>
<keyword id="KW-0378">Hydrolase</keyword>
<keyword id="KW-0413">Isomerase</keyword>
<keyword id="KW-0547">Nucleotide-binding</keyword>
<keyword id="KW-0614">Plasmid</keyword>
<keyword id="KW-0639">Primosome</keyword>
<proteinExistence type="inferred from homology"/>
<feature type="chain" id="PRO_0000391798" description="Probable plasmid replicative DNA helicase">
    <location>
        <begin position="1"/>
        <end position="451"/>
    </location>
</feature>
<feature type="domain" description="SF4 helicase" evidence="2">
    <location>
        <begin position="194"/>
        <end position="451"/>
    </location>
</feature>
<feature type="binding site" evidence="2">
    <location>
        <begin position="225"/>
        <end position="232"/>
    </location>
    <ligand>
        <name>ATP</name>
        <dbReference type="ChEBI" id="CHEBI:30616"/>
    </ligand>
</feature>
<geneLocation type="plasmid">
    <name>pL2</name>
</geneLocation>
<geneLocation type="plasmid">
    <name>pLGV440</name>
</geneLocation>
<accession>B0BCM3</accession>
<accession>P08781</accession>
<accession>P10555</accession>
<accession>P22445</accession>